<sequence length="767" mass="86032">MALSHSLGFPRIGRDRELKKALEAHWKGELDEAGLRAVGQRLRAEHWQLQKDAGIDLLPVGDFAWYDQVLAHSLAFDVIPERFRPAAGKPTLDTLFAMARGAVANKSGGSCCGGAHAQEMTKWFDTNYHYLVPEFSADQQFALSWEQLFEEVAEAHALGHSVKPVLIGPLTYLWLGKEKGSDFDRLDLLERLLPVYGEIFQRLAAQGVEWVQIDEPILVLDLPQAWKNAFERAYNLIQREPCKKLIATYFGGLEDNLGLAANLPVDGLHIDLVRAPEQYPTILDRLPAYKVLSLGMVNGRNVWRCDLEKVLELLRHAHERLGERLWVAPSCSLLHSPVDLEREDQLDAELKSWLAFAVQKCQEVALLGRALEAPDDASVQAALEQSRVVRAARAASTRIHKPEVQARLAAIRPRHAQRQSPFAERIAQQRECLQLPLLPTTTIGSFPQTSAIRLARQSFKQGKLSAAEYTEAMHAEIRHAVEVQENLGLDVLVHGEAERNDMVEYFAEQLDGYAFTRFGWVQSYGSRCVKPAVIVGDLGRPQAMTVEWIKYAQGLTDKPMKGMLTGPVTMLMWSFPREDVSREVQARQLALAIRDEVVDLEAAGIRIIQIDEAAFREGLPLRQAAWQGYLDWATEAFRLAASGVRDETQIHTHMCYSEFNDVIESIAAMDADVITIETSRSDMELLEAFERFAYPNEIGPGVYDIHSPRVPDSAEMAGLLRKAARRIPLERLWVNPDCGLKTRAWPETEAALVNMVAAARQLRAELA</sequence>
<proteinExistence type="inferred from homology"/>
<gene>
    <name evidence="1" type="primary">metE</name>
    <name type="ordered locus">Pmen_1683</name>
</gene>
<name>METE_ECTM1</name>
<dbReference type="EC" id="2.1.1.14" evidence="1"/>
<dbReference type="EMBL" id="CP000680">
    <property type="protein sequence ID" value="ABP84447.1"/>
    <property type="molecule type" value="Genomic_DNA"/>
</dbReference>
<dbReference type="SMR" id="A4XSY1"/>
<dbReference type="STRING" id="399739.Pmen_1683"/>
<dbReference type="KEGG" id="pmy:Pmen_1683"/>
<dbReference type="PATRIC" id="fig|399739.8.peg.1706"/>
<dbReference type="eggNOG" id="COG0620">
    <property type="taxonomic scope" value="Bacteria"/>
</dbReference>
<dbReference type="HOGENOM" id="CLU_013175_0_0_6"/>
<dbReference type="OrthoDB" id="244285at2"/>
<dbReference type="UniPathway" id="UPA00051">
    <property type="reaction ID" value="UER00082"/>
</dbReference>
<dbReference type="GO" id="GO:0003871">
    <property type="term" value="F:5-methyltetrahydropteroyltriglutamate-homocysteine S-methyltransferase activity"/>
    <property type="evidence" value="ECO:0007669"/>
    <property type="project" value="UniProtKB-UniRule"/>
</dbReference>
<dbReference type="GO" id="GO:0008270">
    <property type="term" value="F:zinc ion binding"/>
    <property type="evidence" value="ECO:0007669"/>
    <property type="project" value="InterPro"/>
</dbReference>
<dbReference type="GO" id="GO:0009086">
    <property type="term" value="P:methionine biosynthetic process"/>
    <property type="evidence" value="ECO:0007669"/>
    <property type="project" value="UniProtKB-UniRule"/>
</dbReference>
<dbReference type="GO" id="GO:0032259">
    <property type="term" value="P:methylation"/>
    <property type="evidence" value="ECO:0007669"/>
    <property type="project" value="UniProtKB-KW"/>
</dbReference>
<dbReference type="CDD" id="cd03311">
    <property type="entry name" value="CIMS_C_terminal_like"/>
    <property type="match status" value="1"/>
</dbReference>
<dbReference type="CDD" id="cd03312">
    <property type="entry name" value="CIMS_N_terminal_like"/>
    <property type="match status" value="1"/>
</dbReference>
<dbReference type="FunFam" id="3.20.20.210:FF:000002">
    <property type="entry name" value="5-methyltetrahydropteroyltriglutamate--homocysteine methyltransferase"/>
    <property type="match status" value="1"/>
</dbReference>
<dbReference type="FunFam" id="3.20.20.210:FF:000003">
    <property type="entry name" value="5-methyltetrahydropteroyltriglutamate--homocysteine methyltransferase"/>
    <property type="match status" value="1"/>
</dbReference>
<dbReference type="Gene3D" id="3.20.20.210">
    <property type="match status" value="2"/>
</dbReference>
<dbReference type="HAMAP" id="MF_00172">
    <property type="entry name" value="Meth_synth"/>
    <property type="match status" value="1"/>
</dbReference>
<dbReference type="InterPro" id="IPR013215">
    <property type="entry name" value="Cbl-indep_Met_Synth_N"/>
</dbReference>
<dbReference type="InterPro" id="IPR006276">
    <property type="entry name" value="Cobalamin-indep_Met_synthase"/>
</dbReference>
<dbReference type="InterPro" id="IPR002629">
    <property type="entry name" value="Met_Synth_C/arc"/>
</dbReference>
<dbReference type="InterPro" id="IPR038071">
    <property type="entry name" value="UROD/MetE-like_sf"/>
</dbReference>
<dbReference type="NCBIfam" id="TIGR01371">
    <property type="entry name" value="met_syn_B12ind"/>
    <property type="match status" value="1"/>
</dbReference>
<dbReference type="NCBIfam" id="NF003556">
    <property type="entry name" value="PRK05222.1"/>
    <property type="match status" value="1"/>
</dbReference>
<dbReference type="PANTHER" id="PTHR30519">
    <property type="entry name" value="5-METHYLTETRAHYDROPTEROYLTRIGLUTAMATE--HOMOCYSTEINE METHYLTRANSFERASE"/>
    <property type="match status" value="1"/>
</dbReference>
<dbReference type="Pfam" id="PF08267">
    <property type="entry name" value="Meth_synt_1"/>
    <property type="match status" value="1"/>
</dbReference>
<dbReference type="Pfam" id="PF01717">
    <property type="entry name" value="Meth_synt_2"/>
    <property type="match status" value="1"/>
</dbReference>
<dbReference type="PIRSF" id="PIRSF000382">
    <property type="entry name" value="MeTrfase_B12_ind"/>
    <property type="match status" value="1"/>
</dbReference>
<dbReference type="SUPFAM" id="SSF51726">
    <property type="entry name" value="UROD/MetE-like"/>
    <property type="match status" value="2"/>
</dbReference>
<feature type="chain" id="PRO_1000017265" description="5-methyltetrahydropteroyltriglutamate--homocysteine methyltransferase">
    <location>
        <begin position="1"/>
        <end position="767"/>
    </location>
</feature>
<feature type="active site" description="Proton donor" evidence="1">
    <location>
        <position position="706"/>
    </location>
</feature>
<feature type="binding site" evidence="1">
    <location>
        <begin position="16"/>
        <end position="19"/>
    </location>
    <ligand>
        <name>5-methyltetrahydropteroyltri-L-glutamate</name>
        <dbReference type="ChEBI" id="CHEBI:58207"/>
    </ligand>
</feature>
<feature type="binding site" evidence="1">
    <location>
        <position position="122"/>
    </location>
    <ligand>
        <name>5-methyltetrahydropteroyltri-L-glutamate</name>
        <dbReference type="ChEBI" id="CHEBI:58207"/>
    </ligand>
</feature>
<feature type="binding site" evidence="1">
    <location>
        <begin position="443"/>
        <end position="445"/>
    </location>
    <ligand>
        <name>L-homocysteine</name>
        <dbReference type="ChEBI" id="CHEBI:58199"/>
    </ligand>
</feature>
<feature type="binding site" evidence="1">
    <location>
        <begin position="443"/>
        <end position="445"/>
    </location>
    <ligand>
        <name>L-methionine</name>
        <dbReference type="ChEBI" id="CHEBI:57844"/>
    </ligand>
</feature>
<feature type="binding site" evidence="1">
    <location>
        <position position="496"/>
    </location>
    <ligand>
        <name>L-homocysteine</name>
        <dbReference type="ChEBI" id="CHEBI:58199"/>
    </ligand>
</feature>
<feature type="binding site" evidence="1">
    <location>
        <position position="496"/>
    </location>
    <ligand>
        <name>L-methionine</name>
        <dbReference type="ChEBI" id="CHEBI:57844"/>
    </ligand>
</feature>
<feature type="binding site" evidence="1">
    <location>
        <begin position="527"/>
        <end position="528"/>
    </location>
    <ligand>
        <name>5-methyltetrahydropteroyltri-L-glutamate</name>
        <dbReference type="ChEBI" id="CHEBI:58207"/>
    </ligand>
</feature>
<feature type="binding site" evidence="1">
    <location>
        <position position="573"/>
    </location>
    <ligand>
        <name>5-methyltetrahydropteroyltri-L-glutamate</name>
        <dbReference type="ChEBI" id="CHEBI:58207"/>
    </ligand>
</feature>
<feature type="binding site" evidence="1">
    <location>
        <position position="611"/>
    </location>
    <ligand>
        <name>L-homocysteine</name>
        <dbReference type="ChEBI" id="CHEBI:58199"/>
    </ligand>
</feature>
<feature type="binding site" evidence="1">
    <location>
        <position position="611"/>
    </location>
    <ligand>
        <name>L-methionine</name>
        <dbReference type="ChEBI" id="CHEBI:57844"/>
    </ligand>
</feature>
<feature type="binding site" evidence="1">
    <location>
        <position position="617"/>
    </location>
    <ligand>
        <name>5-methyltetrahydropteroyltri-L-glutamate</name>
        <dbReference type="ChEBI" id="CHEBI:58207"/>
    </ligand>
</feature>
<feature type="binding site" evidence="1">
    <location>
        <position position="653"/>
    </location>
    <ligand>
        <name>Zn(2+)</name>
        <dbReference type="ChEBI" id="CHEBI:29105"/>
        <note>catalytic</note>
    </ligand>
</feature>
<feature type="binding site" evidence="1">
    <location>
        <position position="655"/>
    </location>
    <ligand>
        <name>Zn(2+)</name>
        <dbReference type="ChEBI" id="CHEBI:29105"/>
        <note>catalytic</note>
    </ligand>
</feature>
<feature type="binding site" evidence="1">
    <location>
        <position position="677"/>
    </location>
    <ligand>
        <name>Zn(2+)</name>
        <dbReference type="ChEBI" id="CHEBI:29105"/>
        <note>catalytic</note>
    </ligand>
</feature>
<feature type="binding site" evidence="1">
    <location>
        <position position="738"/>
    </location>
    <ligand>
        <name>Zn(2+)</name>
        <dbReference type="ChEBI" id="CHEBI:29105"/>
        <note>catalytic</note>
    </ligand>
</feature>
<protein>
    <recommendedName>
        <fullName evidence="1">5-methyltetrahydropteroyltriglutamate--homocysteine methyltransferase</fullName>
        <ecNumber evidence="1">2.1.1.14</ecNumber>
    </recommendedName>
    <alternativeName>
        <fullName evidence="1">Cobalamin-independent methionine synthase</fullName>
    </alternativeName>
    <alternativeName>
        <fullName evidence="1">Methionine synthase, vitamin-B12 independent isozyme</fullName>
    </alternativeName>
</protein>
<comment type="function">
    <text evidence="1">Catalyzes the transfer of a methyl group from 5-methyltetrahydrofolate to homocysteine resulting in methionine formation.</text>
</comment>
<comment type="catalytic activity">
    <reaction evidence="1">
        <text>5-methyltetrahydropteroyltri-L-glutamate + L-homocysteine = tetrahydropteroyltri-L-glutamate + L-methionine</text>
        <dbReference type="Rhea" id="RHEA:21196"/>
        <dbReference type="ChEBI" id="CHEBI:57844"/>
        <dbReference type="ChEBI" id="CHEBI:58140"/>
        <dbReference type="ChEBI" id="CHEBI:58199"/>
        <dbReference type="ChEBI" id="CHEBI:58207"/>
        <dbReference type="EC" id="2.1.1.14"/>
    </reaction>
</comment>
<comment type="cofactor">
    <cofactor evidence="1">
        <name>Zn(2+)</name>
        <dbReference type="ChEBI" id="CHEBI:29105"/>
    </cofactor>
    <text evidence="1">Binds 1 zinc ion per subunit.</text>
</comment>
<comment type="pathway">
    <text evidence="1">Amino-acid biosynthesis; L-methionine biosynthesis via de novo pathway; L-methionine from L-homocysteine (MetE route): step 1/1.</text>
</comment>
<comment type="similarity">
    <text evidence="1">Belongs to the vitamin-B12 independent methionine synthase family.</text>
</comment>
<accession>A4XSY1</accession>
<keyword id="KW-0028">Amino-acid biosynthesis</keyword>
<keyword id="KW-0479">Metal-binding</keyword>
<keyword id="KW-0486">Methionine biosynthesis</keyword>
<keyword id="KW-0489">Methyltransferase</keyword>
<keyword id="KW-0677">Repeat</keyword>
<keyword id="KW-0808">Transferase</keyword>
<keyword id="KW-0862">Zinc</keyword>
<organism>
    <name type="scientific">Ectopseudomonas mendocina (strain ymp)</name>
    <name type="common">Pseudomonas mendocina</name>
    <dbReference type="NCBI Taxonomy" id="399739"/>
    <lineage>
        <taxon>Bacteria</taxon>
        <taxon>Pseudomonadati</taxon>
        <taxon>Pseudomonadota</taxon>
        <taxon>Gammaproteobacteria</taxon>
        <taxon>Pseudomonadales</taxon>
        <taxon>Pseudomonadaceae</taxon>
        <taxon>Ectopseudomonas</taxon>
    </lineage>
</organism>
<reference key="1">
    <citation type="submission" date="2007-04" db="EMBL/GenBank/DDBJ databases">
        <title>Complete sequence of Pseudomonas mendocina ymp.</title>
        <authorList>
            <consortium name="US DOE Joint Genome Institute"/>
            <person name="Copeland A."/>
            <person name="Lucas S."/>
            <person name="Lapidus A."/>
            <person name="Barry K."/>
            <person name="Glavina del Rio T."/>
            <person name="Dalin E."/>
            <person name="Tice H."/>
            <person name="Pitluck S."/>
            <person name="Kiss H."/>
            <person name="Brettin T."/>
            <person name="Detter J.C."/>
            <person name="Bruce D."/>
            <person name="Han C."/>
            <person name="Schmutz J."/>
            <person name="Larimer F."/>
            <person name="Land M."/>
            <person name="Hauser L."/>
            <person name="Kyrpides N."/>
            <person name="Mikhailova N."/>
            <person name="Hersman L."/>
            <person name="Dubois J."/>
            <person name="Maurice P."/>
            <person name="Richardson P."/>
        </authorList>
    </citation>
    <scope>NUCLEOTIDE SEQUENCE [LARGE SCALE GENOMIC DNA]</scope>
    <source>
        <strain>ymp</strain>
    </source>
</reference>
<evidence type="ECO:0000255" key="1">
    <source>
        <dbReference type="HAMAP-Rule" id="MF_00172"/>
    </source>
</evidence>